<sequence>MRVIFMGTPDFSVPALRAIAARHQVVAVYSQPPRAAGRGQKPRPSPVHRAAEELGLPVRTPERLKSPQDQGDFAALQADVAVVVAYGLILPQPVLEAPWLGCLNIHASLLPRWRGAAPIHRAIMAGDAETGVAIMQMEAGLDTGPVLAEARTTIGAEDTTADLHDRLAEMGAALIVETLHRLPLPAEPQPAEGVTYAQKIDKAEARIDWGRPAAQVDRQIRGLSPFPGAWCLIGGERVKLLRSRLAAGSGAPGRVLSGFTIACGEGAVEVLEAQREGKRPMPAAEILRGMALPDRLD</sequence>
<protein>
    <recommendedName>
        <fullName evidence="1">Methionyl-tRNA formyltransferase</fullName>
        <ecNumber evidence="1">2.1.2.9</ecNumber>
    </recommendedName>
</protein>
<organism>
    <name type="scientific">Paracoccus denitrificans (strain Pd 1222)</name>
    <dbReference type="NCBI Taxonomy" id="318586"/>
    <lineage>
        <taxon>Bacteria</taxon>
        <taxon>Pseudomonadati</taxon>
        <taxon>Pseudomonadota</taxon>
        <taxon>Alphaproteobacteria</taxon>
        <taxon>Rhodobacterales</taxon>
        <taxon>Paracoccaceae</taxon>
        <taxon>Paracoccus</taxon>
    </lineage>
</organism>
<reference key="1">
    <citation type="submission" date="2006-12" db="EMBL/GenBank/DDBJ databases">
        <title>Complete sequence of chromosome 1 of Paracoccus denitrificans PD1222.</title>
        <authorList>
            <person name="Copeland A."/>
            <person name="Lucas S."/>
            <person name="Lapidus A."/>
            <person name="Barry K."/>
            <person name="Detter J.C."/>
            <person name="Glavina del Rio T."/>
            <person name="Hammon N."/>
            <person name="Israni S."/>
            <person name="Dalin E."/>
            <person name="Tice H."/>
            <person name="Pitluck S."/>
            <person name="Munk A.C."/>
            <person name="Brettin T."/>
            <person name="Bruce D."/>
            <person name="Han C."/>
            <person name="Tapia R."/>
            <person name="Gilna P."/>
            <person name="Schmutz J."/>
            <person name="Larimer F."/>
            <person name="Land M."/>
            <person name="Hauser L."/>
            <person name="Kyrpides N."/>
            <person name="Lykidis A."/>
            <person name="Spiro S."/>
            <person name="Richardson D.J."/>
            <person name="Moir J.W.B."/>
            <person name="Ferguson S.J."/>
            <person name="van Spanning R.J.M."/>
            <person name="Richardson P."/>
        </authorList>
    </citation>
    <scope>NUCLEOTIDE SEQUENCE [LARGE SCALE GENOMIC DNA]</scope>
    <source>
        <strain>Pd 1222</strain>
    </source>
</reference>
<evidence type="ECO:0000255" key="1">
    <source>
        <dbReference type="HAMAP-Rule" id="MF_00182"/>
    </source>
</evidence>
<evidence type="ECO:0000256" key="2">
    <source>
        <dbReference type="SAM" id="MobiDB-lite"/>
    </source>
</evidence>
<dbReference type="EC" id="2.1.2.9" evidence="1"/>
<dbReference type="EMBL" id="CP000489">
    <property type="protein sequence ID" value="ABL68754.1"/>
    <property type="molecule type" value="Genomic_DNA"/>
</dbReference>
<dbReference type="RefSeq" id="WP_011746987.1">
    <property type="nucleotide sequence ID" value="NC_008686.1"/>
</dbReference>
<dbReference type="SMR" id="A1AZR0"/>
<dbReference type="STRING" id="318586.Pden_0642"/>
<dbReference type="EnsemblBacteria" id="ABL68754">
    <property type="protein sequence ID" value="ABL68754"/>
    <property type="gene ID" value="Pden_0642"/>
</dbReference>
<dbReference type="GeneID" id="93451866"/>
<dbReference type="KEGG" id="pde:Pden_0642"/>
<dbReference type="eggNOG" id="COG0223">
    <property type="taxonomic scope" value="Bacteria"/>
</dbReference>
<dbReference type="HOGENOM" id="CLU_033347_1_2_5"/>
<dbReference type="OrthoDB" id="9802815at2"/>
<dbReference type="Proteomes" id="UP000000361">
    <property type="component" value="Chromosome 1"/>
</dbReference>
<dbReference type="GO" id="GO:0005829">
    <property type="term" value="C:cytosol"/>
    <property type="evidence" value="ECO:0007669"/>
    <property type="project" value="TreeGrafter"/>
</dbReference>
<dbReference type="GO" id="GO:0004479">
    <property type="term" value="F:methionyl-tRNA formyltransferase activity"/>
    <property type="evidence" value="ECO:0007669"/>
    <property type="project" value="UniProtKB-UniRule"/>
</dbReference>
<dbReference type="CDD" id="cd08646">
    <property type="entry name" value="FMT_core_Met-tRNA-FMT_N"/>
    <property type="match status" value="1"/>
</dbReference>
<dbReference type="CDD" id="cd08704">
    <property type="entry name" value="Met_tRNA_FMT_C"/>
    <property type="match status" value="1"/>
</dbReference>
<dbReference type="FunFam" id="3.40.50.12230:FF:000001">
    <property type="entry name" value="Methionyl-tRNA formyltransferase"/>
    <property type="match status" value="1"/>
</dbReference>
<dbReference type="Gene3D" id="3.40.50.12230">
    <property type="match status" value="1"/>
</dbReference>
<dbReference type="HAMAP" id="MF_00182">
    <property type="entry name" value="Formyl_trans"/>
    <property type="match status" value="1"/>
</dbReference>
<dbReference type="InterPro" id="IPR005794">
    <property type="entry name" value="Fmt"/>
</dbReference>
<dbReference type="InterPro" id="IPR005793">
    <property type="entry name" value="Formyl_trans_C"/>
</dbReference>
<dbReference type="InterPro" id="IPR002376">
    <property type="entry name" value="Formyl_transf_N"/>
</dbReference>
<dbReference type="InterPro" id="IPR036477">
    <property type="entry name" value="Formyl_transf_N_sf"/>
</dbReference>
<dbReference type="InterPro" id="IPR011034">
    <property type="entry name" value="Formyl_transferase-like_C_sf"/>
</dbReference>
<dbReference type="InterPro" id="IPR044135">
    <property type="entry name" value="Met-tRNA-FMT_C"/>
</dbReference>
<dbReference type="InterPro" id="IPR041711">
    <property type="entry name" value="Met-tRNA-FMT_N"/>
</dbReference>
<dbReference type="NCBIfam" id="TIGR00460">
    <property type="entry name" value="fmt"/>
    <property type="match status" value="1"/>
</dbReference>
<dbReference type="PANTHER" id="PTHR11138">
    <property type="entry name" value="METHIONYL-TRNA FORMYLTRANSFERASE"/>
    <property type="match status" value="1"/>
</dbReference>
<dbReference type="PANTHER" id="PTHR11138:SF5">
    <property type="entry name" value="METHIONYL-TRNA FORMYLTRANSFERASE, MITOCHONDRIAL"/>
    <property type="match status" value="1"/>
</dbReference>
<dbReference type="Pfam" id="PF02911">
    <property type="entry name" value="Formyl_trans_C"/>
    <property type="match status" value="1"/>
</dbReference>
<dbReference type="Pfam" id="PF00551">
    <property type="entry name" value="Formyl_trans_N"/>
    <property type="match status" value="1"/>
</dbReference>
<dbReference type="SUPFAM" id="SSF50486">
    <property type="entry name" value="FMT C-terminal domain-like"/>
    <property type="match status" value="1"/>
</dbReference>
<dbReference type="SUPFAM" id="SSF53328">
    <property type="entry name" value="Formyltransferase"/>
    <property type="match status" value="1"/>
</dbReference>
<accession>A1AZR0</accession>
<name>FMT_PARDP</name>
<feature type="chain" id="PRO_1000020118" description="Methionyl-tRNA formyltransferase">
    <location>
        <begin position="1"/>
        <end position="297"/>
    </location>
</feature>
<feature type="region of interest" description="Disordered" evidence="2">
    <location>
        <begin position="31"/>
        <end position="52"/>
    </location>
</feature>
<feature type="binding site" evidence="1">
    <location>
        <begin position="108"/>
        <end position="111"/>
    </location>
    <ligand>
        <name>(6S)-5,6,7,8-tetrahydrofolate</name>
        <dbReference type="ChEBI" id="CHEBI:57453"/>
    </ligand>
</feature>
<gene>
    <name evidence="1" type="primary">fmt</name>
    <name type="ordered locus">Pden_0642</name>
</gene>
<comment type="function">
    <text evidence="1">Attaches a formyl group to the free amino group of methionyl-tRNA(fMet). The formyl group appears to play a dual role in the initiator identity of N-formylmethionyl-tRNA by promoting its recognition by IF2 and preventing the misappropriation of this tRNA by the elongation apparatus.</text>
</comment>
<comment type="catalytic activity">
    <reaction evidence="1">
        <text>L-methionyl-tRNA(fMet) + (6R)-10-formyltetrahydrofolate = N-formyl-L-methionyl-tRNA(fMet) + (6S)-5,6,7,8-tetrahydrofolate + H(+)</text>
        <dbReference type="Rhea" id="RHEA:24380"/>
        <dbReference type="Rhea" id="RHEA-COMP:9952"/>
        <dbReference type="Rhea" id="RHEA-COMP:9953"/>
        <dbReference type="ChEBI" id="CHEBI:15378"/>
        <dbReference type="ChEBI" id="CHEBI:57453"/>
        <dbReference type="ChEBI" id="CHEBI:78530"/>
        <dbReference type="ChEBI" id="CHEBI:78844"/>
        <dbReference type="ChEBI" id="CHEBI:195366"/>
        <dbReference type="EC" id="2.1.2.9"/>
    </reaction>
</comment>
<comment type="similarity">
    <text evidence="1">Belongs to the Fmt family.</text>
</comment>
<proteinExistence type="inferred from homology"/>
<keyword id="KW-0648">Protein biosynthesis</keyword>
<keyword id="KW-1185">Reference proteome</keyword>
<keyword id="KW-0808">Transferase</keyword>